<proteinExistence type="inferred from homology"/>
<gene>
    <name evidence="1" type="primary">fabZ</name>
    <name type="ordered locus">TT_C1463</name>
</gene>
<dbReference type="EC" id="4.2.1.59" evidence="1"/>
<dbReference type="EMBL" id="AE017221">
    <property type="protein sequence ID" value="AAS81805.1"/>
    <property type="molecule type" value="Genomic_DNA"/>
</dbReference>
<dbReference type="RefSeq" id="WP_011173839.1">
    <property type="nucleotide sequence ID" value="NC_005835.1"/>
</dbReference>
<dbReference type="SMR" id="Q72HM3"/>
<dbReference type="GeneID" id="3168509"/>
<dbReference type="KEGG" id="tth:TT_C1463"/>
<dbReference type="eggNOG" id="COG0764">
    <property type="taxonomic scope" value="Bacteria"/>
</dbReference>
<dbReference type="HOGENOM" id="CLU_078912_1_2_0"/>
<dbReference type="OrthoDB" id="9772788at2"/>
<dbReference type="Proteomes" id="UP000000592">
    <property type="component" value="Chromosome"/>
</dbReference>
<dbReference type="GO" id="GO:0005737">
    <property type="term" value="C:cytoplasm"/>
    <property type="evidence" value="ECO:0007669"/>
    <property type="project" value="UniProtKB-SubCell"/>
</dbReference>
<dbReference type="GO" id="GO:0016020">
    <property type="term" value="C:membrane"/>
    <property type="evidence" value="ECO:0007669"/>
    <property type="project" value="GOC"/>
</dbReference>
<dbReference type="GO" id="GO:0019171">
    <property type="term" value="F:(3R)-hydroxyacyl-[acyl-carrier-protein] dehydratase activity"/>
    <property type="evidence" value="ECO:0007669"/>
    <property type="project" value="UniProtKB-EC"/>
</dbReference>
<dbReference type="GO" id="GO:0006633">
    <property type="term" value="P:fatty acid biosynthetic process"/>
    <property type="evidence" value="ECO:0007669"/>
    <property type="project" value="UniProtKB-UniRule"/>
</dbReference>
<dbReference type="GO" id="GO:0009245">
    <property type="term" value="P:lipid A biosynthetic process"/>
    <property type="evidence" value="ECO:0007669"/>
    <property type="project" value="UniProtKB-UniRule"/>
</dbReference>
<dbReference type="CDD" id="cd01288">
    <property type="entry name" value="FabZ"/>
    <property type="match status" value="1"/>
</dbReference>
<dbReference type="FunFam" id="3.10.129.10:FF:000001">
    <property type="entry name" value="3-hydroxyacyl-[acyl-carrier-protein] dehydratase FabZ"/>
    <property type="match status" value="1"/>
</dbReference>
<dbReference type="Gene3D" id="3.10.129.10">
    <property type="entry name" value="Hotdog Thioesterase"/>
    <property type="match status" value="1"/>
</dbReference>
<dbReference type="HAMAP" id="MF_00406">
    <property type="entry name" value="FabZ"/>
    <property type="match status" value="1"/>
</dbReference>
<dbReference type="InterPro" id="IPR013114">
    <property type="entry name" value="FabA_FabZ"/>
</dbReference>
<dbReference type="InterPro" id="IPR010084">
    <property type="entry name" value="FabZ"/>
</dbReference>
<dbReference type="InterPro" id="IPR029069">
    <property type="entry name" value="HotDog_dom_sf"/>
</dbReference>
<dbReference type="NCBIfam" id="TIGR01750">
    <property type="entry name" value="fabZ"/>
    <property type="match status" value="1"/>
</dbReference>
<dbReference type="NCBIfam" id="NF000582">
    <property type="entry name" value="PRK00006.1"/>
    <property type="match status" value="1"/>
</dbReference>
<dbReference type="PANTHER" id="PTHR30272">
    <property type="entry name" value="3-HYDROXYACYL-[ACYL-CARRIER-PROTEIN] DEHYDRATASE"/>
    <property type="match status" value="1"/>
</dbReference>
<dbReference type="PANTHER" id="PTHR30272:SF1">
    <property type="entry name" value="3-HYDROXYACYL-[ACYL-CARRIER-PROTEIN] DEHYDRATASE"/>
    <property type="match status" value="1"/>
</dbReference>
<dbReference type="Pfam" id="PF07977">
    <property type="entry name" value="FabA"/>
    <property type="match status" value="1"/>
</dbReference>
<dbReference type="SUPFAM" id="SSF54637">
    <property type="entry name" value="Thioesterase/thiol ester dehydrase-isomerase"/>
    <property type="match status" value="1"/>
</dbReference>
<sequence>MDIREILKVLPHRYPFLLVDRVLEADERRFKALKNVTFNEPHFQGHFPGHPVMPGVLILEAMAQAAVGALVRQPGFPQGGLAFLAGVEGARFRRPVYPGDTLILEGELLAFRRGVGKVAVRALVEGEERASATLTFVLQGAS</sequence>
<protein>
    <recommendedName>
        <fullName evidence="1">3-hydroxyacyl-[acyl-carrier-protein] dehydratase FabZ</fullName>
        <ecNumber evidence="1">4.2.1.59</ecNumber>
    </recommendedName>
    <alternativeName>
        <fullName evidence="1">(3R)-hydroxymyristoyl-[acyl-carrier-protein] dehydratase</fullName>
        <shortName evidence="1">(3R)-hydroxymyristoyl-ACP dehydrase</shortName>
    </alternativeName>
    <alternativeName>
        <fullName evidence="1">Beta-hydroxyacyl-ACP dehydratase</fullName>
    </alternativeName>
</protein>
<comment type="function">
    <text evidence="1">Involved in unsaturated fatty acids biosynthesis. Catalyzes the dehydration of short chain beta-hydroxyacyl-ACPs and long chain saturated and unsaturated beta-hydroxyacyl-ACPs.</text>
</comment>
<comment type="catalytic activity">
    <reaction evidence="1">
        <text>a (3R)-hydroxyacyl-[ACP] = a (2E)-enoyl-[ACP] + H2O</text>
        <dbReference type="Rhea" id="RHEA:13097"/>
        <dbReference type="Rhea" id="RHEA-COMP:9925"/>
        <dbReference type="Rhea" id="RHEA-COMP:9945"/>
        <dbReference type="ChEBI" id="CHEBI:15377"/>
        <dbReference type="ChEBI" id="CHEBI:78784"/>
        <dbReference type="ChEBI" id="CHEBI:78827"/>
        <dbReference type="EC" id="4.2.1.59"/>
    </reaction>
</comment>
<comment type="subcellular location">
    <subcellularLocation>
        <location evidence="1">Cytoplasm</location>
    </subcellularLocation>
</comment>
<comment type="similarity">
    <text evidence="1">Belongs to the thioester dehydratase family. FabZ subfamily.</text>
</comment>
<evidence type="ECO:0000255" key="1">
    <source>
        <dbReference type="HAMAP-Rule" id="MF_00406"/>
    </source>
</evidence>
<keyword id="KW-0963">Cytoplasm</keyword>
<keyword id="KW-0441">Lipid A biosynthesis</keyword>
<keyword id="KW-0444">Lipid biosynthesis</keyword>
<keyword id="KW-0443">Lipid metabolism</keyword>
<keyword id="KW-0456">Lyase</keyword>
<name>FABZ_THET2</name>
<organism>
    <name type="scientific">Thermus thermophilus (strain ATCC BAA-163 / DSM 7039 / HB27)</name>
    <dbReference type="NCBI Taxonomy" id="262724"/>
    <lineage>
        <taxon>Bacteria</taxon>
        <taxon>Thermotogati</taxon>
        <taxon>Deinococcota</taxon>
        <taxon>Deinococci</taxon>
        <taxon>Thermales</taxon>
        <taxon>Thermaceae</taxon>
        <taxon>Thermus</taxon>
    </lineage>
</organism>
<accession>Q72HM3</accession>
<reference key="1">
    <citation type="journal article" date="2004" name="Nat. Biotechnol.">
        <title>The genome sequence of the extreme thermophile Thermus thermophilus.</title>
        <authorList>
            <person name="Henne A."/>
            <person name="Brueggemann H."/>
            <person name="Raasch C."/>
            <person name="Wiezer A."/>
            <person name="Hartsch T."/>
            <person name="Liesegang H."/>
            <person name="Johann A."/>
            <person name="Lienard T."/>
            <person name="Gohl O."/>
            <person name="Martinez-Arias R."/>
            <person name="Jacobi C."/>
            <person name="Starkuviene V."/>
            <person name="Schlenczeck S."/>
            <person name="Dencker S."/>
            <person name="Huber R."/>
            <person name="Klenk H.-P."/>
            <person name="Kramer W."/>
            <person name="Merkl R."/>
            <person name="Gottschalk G."/>
            <person name="Fritz H.-J."/>
        </authorList>
    </citation>
    <scope>NUCLEOTIDE SEQUENCE [LARGE SCALE GENOMIC DNA]</scope>
    <source>
        <strain>ATCC BAA-163 / DSM 7039 / HB27</strain>
    </source>
</reference>
<feature type="chain" id="PRO_0000091755" description="3-hydroxyacyl-[acyl-carrier-protein] dehydratase FabZ">
    <location>
        <begin position="1"/>
        <end position="142"/>
    </location>
</feature>
<feature type="active site" evidence="1">
    <location>
        <position position="46"/>
    </location>
</feature>